<dbReference type="EC" id="4.2.1.108" evidence="1"/>
<dbReference type="EMBL" id="AP011115">
    <property type="protein sequence ID" value="BAH49276.1"/>
    <property type="molecule type" value="Genomic_DNA"/>
</dbReference>
<dbReference type="RefSeq" id="WP_012688262.1">
    <property type="nucleotide sequence ID" value="NC_012522.1"/>
</dbReference>
<dbReference type="SMR" id="C1AVJ6"/>
<dbReference type="STRING" id="632772.ROP_10290"/>
<dbReference type="KEGG" id="rop:ROP_10290"/>
<dbReference type="PATRIC" id="fig|632772.20.peg.1095"/>
<dbReference type="HOGENOM" id="CLU_154525_0_0_11"/>
<dbReference type="OrthoDB" id="4406415at2"/>
<dbReference type="UniPathway" id="UPA00067">
    <property type="reaction ID" value="UER00123"/>
</dbReference>
<dbReference type="Proteomes" id="UP000002212">
    <property type="component" value="Chromosome"/>
</dbReference>
<dbReference type="GO" id="GO:0033990">
    <property type="term" value="F:ectoine synthase activity"/>
    <property type="evidence" value="ECO:0007669"/>
    <property type="project" value="UniProtKB-EC"/>
</dbReference>
<dbReference type="GO" id="GO:0019491">
    <property type="term" value="P:ectoine biosynthetic process"/>
    <property type="evidence" value="ECO:0007669"/>
    <property type="project" value="UniProtKB-UniRule"/>
</dbReference>
<dbReference type="CDD" id="cd06978">
    <property type="entry name" value="cupin_EctC"/>
    <property type="match status" value="1"/>
</dbReference>
<dbReference type="Gene3D" id="2.60.120.10">
    <property type="entry name" value="Jelly Rolls"/>
    <property type="match status" value="1"/>
</dbReference>
<dbReference type="HAMAP" id="MF_01255">
    <property type="entry name" value="Ectoine_synth"/>
    <property type="match status" value="1"/>
</dbReference>
<dbReference type="InterPro" id="IPR010462">
    <property type="entry name" value="Ectoine_synth"/>
</dbReference>
<dbReference type="InterPro" id="IPR014710">
    <property type="entry name" value="RmlC-like_jellyroll"/>
</dbReference>
<dbReference type="InterPro" id="IPR011051">
    <property type="entry name" value="RmlC_Cupin_sf"/>
</dbReference>
<dbReference type="NCBIfam" id="NF009806">
    <property type="entry name" value="PRK13290.1"/>
    <property type="match status" value="1"/>
</dbReference>
<dbReference type="PANTHER" id="PTHR39289">
    <property type="match status" value="1"/>
</dbReference>
<dbReference type="PANTHER" id="PTHR39289:SF1">
    <property type="entry name" value="L-ECTOINE SYNTHASE"/>
    <property type="match status" value="1"/>
</dbReference>
<dbReference type="Pfam" id="PF06339">
    <property type="entry name" value="Ectoine_synth"/>
    <property type="match status" value="1"/>
</dbReference>
<dbReference type="SUPFAM" id="SSF51182">
    <property type="entry name" value="RmlC-like cupins"/>
    <property type="match status" value="1"/>
</dbReference>
<protein>
    <recommendedName>
        <fullName evidence="1">L-ectoine synthase</fullName>
        <ecNumber evidence="1">4.2.1.108</ecNumber>
    </recommendedName>
    <alternativeName>
        <fullName evidence="1">N-acetyldiaminobutyrate dehydratase</fullName>
    </alternativeName>
</protein>
<sequence>MIVRTTAEITDTERDITSEDGNWRSKRIILGGDKVGFSFHETTIKAGSVNEFHYANHVEAVWLVEGTGKLIDLDNDKVYELGPGSMYLLNGHERHRVEPETEMRMLCVFNPPVTGREVHDENGVYPLIEVPA</sequence>
<feature type="chain" id="PRO_1000165102" description="L-ectoine synthase">
    <location>
        <begin position="1"/>
        <end position="132"/>
    </location>
</feature>
<proteinExistence type="inferred from homology"/>
<reference key="1">
    <citation type="submission" date="2009-03" db="EMBL/GenBank/DDBJ databases">
        <title>Comparison of the complete genome sequences of Rhodococcus erythropolis PR4 and Rhodococcus opacus B4.</title>
        <authorList>
            <person name="Takarada H."/>
            <person name="Sekine M."/>
            <person name="Hosoyama A."/>
            <person name="Yamada R."/>
            <person name="Fujisawa T."/>
            <person name="Omata S."/>
            <person name="Shimizu A."/>
            <person name="Tsukatani N."/>
            <person name="Tanikawa S."/>
            <person name="Fujita N."/>
            <person name="Harayama S."/>
        </authorList>
    </citation>
    <scope>NUCLEOTIDE SEQUENCE [LARGE SCALE GENOMIC DNA]</scope>
    <source>
        <strain>B4</strain>
    </source>
</reference>
<comment type="function">
    <text evidence="1">Catalyzes the circularization of gamma-N-acetyl-alpha,gamma-diaminobutyric acid (ADABA) to ectoine (1,4,5,6-tetrahydro-2-methyl-4-pyrimidine carboxylic acid), which is an excellent osmoprotectant.</text>
</comment>
<comment type="catalytic activity">
    <reaction evidence="1">
        <text>(2S)-4-acetamido-2-aminobutanoate = L-ectoine + H2O</text>
        <dbReference type="Rhea" id="RHEA:17281"/>
        <dbReference type="ChEBI" id="CHEBI:15377"/>
        <dbReference type="ChEBI" id="CHEBI:58515"/>
        <dbReference type="ChEBI" id="CHEBI:58929"/>
        <dbReference type="EC" id="4.2.1.108"/>
    </reaction>
</comment>
<comment type="pathway">
    <text evidence="1">Amine and polyamine biosynthesis; ectoine biosynthesis; L-ectoine from L-aspartate 4-semialdehyde: step 3/3.</text>
</comment>
<comment type="similarity">
    <text evidence="1">Belongs to the ectoine synthase family.</text>
</comment>
<keyword id="KW-0456">Lyase</keyword>
<name>ECTC_RHOOB</name>
<organism>
    <name type="scientific">Rhodococcus opacus (strain B4)</name>
    <dbReference type="NCBI Taxonomy" id="632772"/>
    <lineage>
        <taxon>Bacteria</taxon>
        <taxon>Bacillati</taxon>
        <taxon>Actinomycetota</taxon>
        <taxon>Actinomycetes</taxon>
        <taxon>Mycobacteriales</taxon>
        <taxon>Nocardiaceae</taxon>
        <taxon>Rhodococcus</taxon>
    </lineage>
</organism>
<gene>
    <name evidence="1" type="primary">ectC</name>
    <name type="ordered locus">ROP_10290</name>
</gene>
<accession>C1AVJ6</accession>
<evidence type="ECO:0000255" key="1">
    <source>
        <dbReference type="HAMAP-Rule" id="MF_01255"/>
    </source>
</evidence>